<accession>Q1RMK1</accession>
<proteinExistence type="evidence at transcript level"/>
<dbReference type="EMBL" id="BC114851">
    <property type="protein sequence ID" value="AAI14852.1"/>
    <property type="molecule type" value="mRNA"/>
</dbReference>
<dbReference type="RefSeq" id="NP_001070602.1">
    <property type="nucleotide sequence ID" value="NM_001077134.2"/>
</dbReference>
<dbReference type="SMR" id="Q1RMK1"/>
<dbReference type="FunCoup" id="Q1RMK1">
    <property type="interactions" value="6"/>
</dbReference>
<dbReference type="STRING" id="9913.ENSBTAP00000027768"/>
<dbReference type="PaxDb" id="9913-ENSBTAP00000027768"/>
<dbReference type="GeneID" id="768078"/>
<dbReference type="KEGG" id="bta:768078"/>
<dbReference type="CTD" id="339145"/>
<dbReference type="eggNOG" id="ENOG502QT9N">
    <property type="taxonomic scope" value="Eukaryota"/>
</dbReference>
<dbReference type="HOGENOM" id="CLU_072172_2_0_1"/>
<dbReference type="InParanoid" id="Q1RMK1"/>
<dbReference type="OrthoDB" id="60621at2759"/>
<dbReference type="TreeFam" id="TF324316"/>
<dbReference type="Proteomes" id="UP000009136">
    <property type="component" value="Unplaced"/>
</dbReference>
<dbReference type="GO" id="GO:0005814">
    <property type="term" value="C:centriole"/>
    <property type="evidence" value="ECO:0007669"/>
    <property type="project" value="UniProtKB-SubCell"/>
</dbReference>
<dbReference type="GO" id="GO:0036064">
    <property type="term" value="C:ciliary basal body"/>
    <property type="evidence" value="ECO:0000318"/>
    <property type="project" value="GO_Central"/>
</dbReference>
<dbReference type="GO" id="GO:0035869">
    <property type="term" value="C:ciliary transition zone"/>
    <property type="evidence" value="ECO:0000318"/>
    <property type="project" value="GO_Central"/>
</dbReference>
<dbReference type="GO" id="GO:0005737">
    <property type="term" value="C:cytoplasm"/>
    <property type="evidence" value="ECO:0007669"/>
    <property type="project" value="UniProtKB-KW"/>
</dbReference>
<dbReference type="GO" id="GO:0060271">
    <property type="term" value="P:cilium assembly"/>
    <property type="evidence" value="ECO:0000318"/>
    <property type="project" value="GO_Central"/>
</dbReference>
<dbReference type="CDD" id="cd07598">
    <property type="entry name" value="BAR_FAM92"/>
    <property type="match status" value="1"/>
</dbReference>
<dbReference type="Gene3D" id="1.20.1270.60">
    <property type="entry name" value="Arfaptin homology (AH) domain/BAR domain"/>
    <property type="match status" value="1"/>
</dbReference>
<dbReference type="InterPro" id="IPR027267">
    <property type="entry name" value="AH/BAR_dom_sf"/>
</dbReference>
<dbReference type="InterPro" id="IPR035590">
    <property type="entry name" value="BAR_CBAR1/2"/>
</dbReference>
<dbReference type="InterPro" id="IPR009602">
    <property type="entry name" value="CBAR/FAM92"/>
</dbReference>
<dbReference type="PANTHER" id="PTHR21223:SF3">
    <property type="entry name" value="CBY1-INTERACTING BAR DOMAIN-CONTAINING PROTEIN 2"/>
    <property type="match status" value="1"/>
</dbReference>
<dbReference type="PANTHER" id="PTHR21223">
    <property type="entry name" value="CBY1-INTERACTING BAR DOMAIN-CONTAINING PROTEIN HOMOLOG"/>
    <property type="match status" value="1"/>
</dbReference>
<dbReference type="Pfam" id="PF06730">
    <property type="entry name" value="FAM92"/>
    <property type="match status" value="1"/>
</dbReference>
<dbReference type="SUPFAM" id="SSF103657">
    <property type="entry name" value="BAR/IMD domain-like"/>
    <property type="match status" value="1"/>
</dbReference>
<evidence type="ECO:0000250" key="1">
    <source>
        <dbReference type="UniProtKB" id="A1XBS5"/>
    </source>
</evidence>
<evidence type="ECO:0000250" key="2">
    <source>
        <dbReference type="UniProtKB" id="Q6ZTR7"/>
    </source>
</evidence>
<evidence type="ECO:0000256" key="3">
    <source>
        <dbReference type="SAM" id="MobiDB-lite"/>
    </source>
</evidence>
<evidence type="ECO:0000305" key="4"/>
<protein>
    <recommendedName>
        <fullName>CBY1-interacting BAR domain-containing protein 2</fullName>
    </recommendedName>
    <alternativeName>
        <fullName>Protein FAM92B</fullName>
    </alternativeName>
</protein>
<feature type="chain" id="PRO_0000333003" description="CBY1-interacting BAR domain-containing protein 2">
    <location>
        <begin position="1"/>
        <end position="288"/>
    </location>
</feature>
<feature type="region of interest" description="BAR-like" evidence="1">
    <location>
        <begin position="6"/>
        <end position="217"/>
    </location>
</feature>
<feature type="region of interest" description="Disordered" evidence="3">
    <location>
        <begin position="133"/>
        <end position="157"/>
    </location>
</feature>
<feature type="region of interest" description="Disordered" evidence="3">
    <location>
        <begin position="256"/>
        <end position="288"/>
    </location>
</feature>
<feature type="compositionally biased region" description="Polar residues" evidence="3">
    <location>
        <begin position="138"/>
        <end position="157"/>
    </location>
</feature>
<feature type="compositionally biased region" description="Acidic residues" evidence="3">
    <location>
        <begin position="266"/>
        <end position="276"/>
    </location>
</feature>
<reference key="1">
    <citation type="submission" date="2006-04" db="EMBL/GenBank/DDBJ databases">
        <authorList>
            <consortium name="NIH - Mammalian Gene Collection (MGC) project"/>
        </authorList>
    </citation>
    <scope>NUCLEOTIDE SEQUENCE [LARGE SCALE MRNA]</scope>
    <source>
        <strain>Hereford</strain>
        <tissue>Hypothalamus</tissue>
    </source>
</reference>
<sequence>MNIILSRDSQVRVMEDTVTNAEKSFGQFCSLLAAYTRKTARLRDKADQLVKQLIDFANTENPEMRATLRNFAEDLAKVQDYRQAEVERLETKVINPLKLYGVQIKQTRAEIKKFKSVRNNEIKQLEKLEKLRQKSPSDRQTISQAETSVQRASVDASRTSHQLEETVDTFQKQKLKDIQKIFSDFVTIEMVFHAKAVEVYSSAFQTLESYDLEKDLEDFRAKMHGVYGRYDARPPLMDTTLSPALPWSLAQSAQSTIRSQRKEAVSEDDSAEEDPVEDLRGQAQRLNQ</sequence>
<gene>
    <name type="primary">CIBAR2</name>
    <name type="synonym">FAM92B</name>
</gene>
<keyword id="KW-0966">Cell projection</keyword>
<keyword id="KW-0970">Cilium biogenesis/degradation</keyword>
<keyword id="KW-0963">Cytoplasm</keyword>
<keyword id="KW-0206">Cytoskeleton</keyword>
<keyword id="KW-1185">Reference proteome</keyword>
<organism>
    <name type="scientific">Bos taurus</name>
    <name type="common">Bovine</name>
    <dbReference type="NCBI Taxonomy" id="9913"/>
    <lineage>
        <taxon>Eukaryota</taxon>
        <taxon>Metazoa</taxon>
        <taxon>Chordata</taxon>
        <taxon>Craniata</taxon>
        <taxon>Vertebrata</taxon>
        <taxon>Euteleostomi</taxon>
        <taxon>Mammalia</taxon>
        <taxon>Eutheria</taxon>
        <taxon>Laurasiatheria</taxon>
        <taxon>Artiodactyla</taxon>
        <taxon>Ruminantia</taxon>
        <taxon>Pecora</taxon>
        <taxon>Bovidae</taxon>
        <taxon>Bovinae</taxon>
        <taxon>Bos</taxon>
    </lineage>
</organism>
<name>CBAR2_BOVIN</name>
<comment type="function">
    <text evidence="1 2">May play a role in ciliogenesis. In cooperation with CBY1 may facilitate ciliogenesis likely by the recruitment and fusion of endosomal vesicles at distal appendages during early stages of ciliogenesis.</text>
</comment>
<comment type="subunit">
    <text evidence="2">Homodimer (via BAR-like domain). Heterodimer (via BAR-like domain) with FAM92A. Interacts with CBY1.</text>
</comment>
<comment type="subcellular location">
    <subcellularLocation>
        <location evidence="2">Cytoplasm</location>
        <location evidence="2">Cytoskeleton</location>
        <location evidence="2">Microtubule organizing center</location>
        <location evidence="2">Centrosome</location>
        <location evidence="2">Centriole</location>
    </subcellularLocation>
    <subcellularLocation>
        <location evidence="2">Cytoplasm</location>
        <location evidence="2">Cytoskeleton</location>
        <location evidence="2">Cilium basal body</location>
    </subcellularLocation>
    <text evidence="2">Extensive colocalization with CBY1 at mother centrioles.</text>
</comment>
<comment type="domain">
    <text evidence="1">The BAR-like domain displays limited similarity to other BAR domains.</text>
</comment>
<comment type="similarity">
    <text evidence="4">Belongs to the CIBAR family.</text>
</comment>